<gene>
    <name type="ORF">DDB_G0279653</name>
</gene>
<dbReference type="EMBL" id="AAFI02000032">
    <property type="protein sequence ID" value="EAL67601.1"/>
    <property type="molecule type" value="Genomic_DNA"/>
</dbReference>
<dbReference type="RefSeq" id="XP_641576.1">
    <property type="nucleotide sequence ID" value="XM_636484.1"/>
</dbReference>
<dbReference type="FunCoup" id="Q54WH7">
    <property type="interactions" value="877"/>
</dbReference>
<dbReference type="GlyGen" id="Q54WH7">
    <property type="glycosylation" value="1 site"/>
</dbReference>
<dbReference type="PaxDb" id="44689-DDB0205961"/>
<dbReference type="EnsemblProtists" id="EAL67601">
    <property type="protein sequence ID" value="EAL67601"/>
    <property type="gene ID" value="DDB_G0279653"/>
</dbReference>
<dbReference type="GeneID" id="8622151"/>
<dbReference type="KEGG" id="ddi:DDB_G0279653"/>
<dbReference type="dictyBase" id="DDB_G0279653"/>
<dbReference type="VEuPathDB" id="AmoebaDB:DDB_G0279653"/>
<dbReference type="eggNOG" id="ENOG502RDQ7">
    <property type="taxonomic scope" value="Eukaryota"/>
</dbReference>
<dbReference type="HOGENOM" id="CLU_367407_0_0_1"/>
<dbReference type="InParanoid" id="Q54WH7"/>
<dbReference type="OMA" id="PHINFEN"/>
<dbReference type="PRO" id="PR:Q54WH7"/>
<dbReference type="Proteomes" id="UP000002195">
    <property type="component" value="Chromosome 3"/>
</dbReference>
<organism>
    <name type="scientific">Dictyostelium discoideum</name>
    <name type="common">Social amoeba</name>
    <dbReference type="NCBI Taxonomy" id="44689"/>
    <lineage>
        <taxon>Eukaryota</taxon>
        <taxon>Amoebozoa</taxon>
        <taxon>Evosea</taxon>
        <taxon>Eumycetozoa</taxon>
        <taxon>Dictyostelia</taxon>
        <taxon>Dictyosteliales</taxon>
        <taxon>Dictyosteliaceae</taxon>
        <taxon>Dictyostelium</taxon>
    </lineage>
</organism>
<keyword id="KW-1185">Reference proteome</keyword>
<proteinExistence type="predicted"/>
<accession>Q54WH7</accession>
<feature type="chain" id="PRO_0000352438" description="Putative uncharacterized protein DDB_G0279653">
    <location>
        <begin position="1"/>
        <end position="759"/>
    </location>
</feature>
<feature type="region of interest" description="Disordered" evidence="1">
    <location>
        <begin position="1"/>
        <end position="47"/>
    </location>
</feature>
<feature type="region of interest" description="Disordered" evidence="1">
    <location>
        <begin position="142"/>
        <end position="380"/>
    </location>
</feature>
<feature type="region of interest" description="Disordered" evidence="1">
    <location>
        <begin position="409"/>
        <end position="428"/>
    </location>
</feature>
<feature type="region of interest" description="Disordered" evidence="1">
    <location>
        <begin position="463"/>
        <end position="504"/>
    </location>
</feature>
<feature type="region of interest" description="Disordered" evidence="1">
    <location>
        <begin position="654"/>
        <end position="759"/>
    </location>
</feature>
<feature type="compositionally biased region" description="Low complexity" evidence="1">
    <location>
        <begin position="1"/>
        <end position="36"/>
    </location>
</feature>
<feature type="compositionally biased region" description="Low complexity" evidence="1">
    <location>
        <begin position="142"/>
        <end position="211"/>
    </location>
</feature>
<feature type="compositionally biased region" description="Low complexity" evidence="1">
    <location>
        <begin position="221"/>
        <end position="347"/>
    </location>
</feature>
<feature type="compositionally biased region" description="Polar residues" evidence="1">
    <location>
        <begin position="348"/>
        <end position="360"/>
    </location>
</feature>
<feature type="compositionally biased region" description="Low complexity" evidence="1">
    <location>
        <begin position="463"/>
        <end position="495"/>
    </location>
</feature>
<feature type="compositionally biased region" description="Low complexity" evidence="1">
    <location>
        <begin position="660"/>
        <end position="747"/>
    </location>
</feature>
<reference key="1">
    <citation type="journal article" date="2005" name="Nature">
        <title>The genome of the social amoeba Dictyostelium discoideum.</title>
        <authorList>
            <person name="Eichinger L."/>
            <person name="Pachebat J.A."/>
            <person name="Gloeckner G."/>
            <person name="Rajandream M.A."/>
            <person name="Sucgang R."/>
            <person name="Berriman M."/>
            <person name="Song J."/>
            <person name="Olsen R."/>
            <person name="Szafranski K."/>
            <person name="Xu Q."/>
            <person name="Tunggal B."/>
            <person name="Kummerfeld S."/>
            <person name="Madera M."/>
            <person name="Konfortov B.A."/>
            <person name="Rivero F."/>
            <person name="Bankier A.T."/>
            <person name="Lehmann R."/>
            <person name="Hamlin N."/>
            <person name="Davies R."/>
            <person name="Gaudet P."/>
            <person name="Fey P."/>
            <person name="Pilcher K."/>
            <person name="Chen G."/>
            <person name="Saunders D."/>
            <person name="Sodergren E.J."/>
            <person name="Davis P."/>
            <person name="Kerhornou A."/>
            <person name="Nie X."/>
            <person name="Hall N."/>
            <person name="Anjard C."/>
            <person name="Hemphill L."/>
            <person name="Bason N."/>
            <person name="Farbrother P."/>
            <person name="Desany B."/>
            <person name="Just E."/>
            <person name="Morio T."/>
            <person name="Rost R."/>
            <person name="Churcher C.M."/>
            <person name="Cooper J."/>
            <person name="Haydock S."/>
            <person name="van Driessche N."/>
            <person name="Cronin A."/>
            <person name="Goodhead I."/>
            <person name="Muzny D.M."/>
            <person name="Mourier T."/>
            <person name="Pain A."/>
            <person name="Lu M."/>
            <person name="Harper D."/>
            <person name="Lindsay R."/>
            <person name="Hauser H."/>
            <person name="James K.D."/>
            <person name="Quiles M."/>
            <person name="Madan Babu M."/>
            <person name="Saito T."/>
            <person name="Buchrieser C."/>
            <person name="Wardroper A."/>
            <person name="Felder M."/>
            <person name="Thangavelu M."/>
            <person name="Johnson D."/>
            <person name="Knights A."/>
            <person name="Loulseged H."/>
            <person name="Mungall K.L."/>
            <person name="Oliver K."/>
            <person name="Price C."/>
            <person name="Quail M.A."/>
            <person name="Urushihara H."/>
            <person name="Hernandez J."/>
            <person name="Rabbinowitsch E."/>
            <person name="Steffen D."/>
            <person name="Sanders M."/>
            <person name="Ma J."/>
            <person name="Kohara Y."/>
            <person name="Sharp S."/>
            <person name="Simmonds M.N."/>
            <person name="Spiegler S."/>
            <person name="Tivey A."/>
            <person name="Sugano S."/>
            <person name="White B."/>
            <person name="Walker D."/>
            <person name="Woodward J.R."/>
            <person name="Winckler T."/>
            <person name="Tanaka Y."/>
            <person name="Shaulsky G."/>
            <person name="Schleicher M."/>
            <person name="Weinstock G.M."/>
            <person name="Rosenthal A."/>
            <person name="Cox E.C."/>
            <person name="Chisholm R.L."/>
            <person name="Gibbs R.A."/>
            <person name="Loomis W.F."/>
            <person name="Platzer M."/>
            <person name="Kay R.R."/>
            <person name="Williams J.G."/>
            <person name="Dear P.H."/>
            <person name="Noegel A.A."/>
            <person name="Barrell B.G."/>
            <person name="Kuspa A."/>
        </authorList>
    </citation>
    <scope>NUCLEOTIDE SEQUENCE [LARGE SCALE GENOMIC DNA]</scope>
    <source>
        <strain>AX4</strain>
    </source>
</reference>
<protein>
    <recommendedName>
        <fullName>Putative uncharacterized protein DDB_G0279653</fullName>
    </recommendedName>
</protein>
<evidence type="ECO:0000256" key="1">
    <source>
        <dbReference type="SAM" id="MobiDB-lite"/>
    </source>
</evidence>
<sequence>MSSNNNFDNNKNNNNNNNSNQNNNNIDNGGNNNETNPTTWKFKAQTPTDFNITVRKRRNSEPGVLVQRSYKNYVTHWKLETKKPTKYKDAKEERLRQQAQQQQQAQQQAQQQQQQAQQQQQQQQQQQQQQQQQQQAQQQAQQQQNQHQQNQHQQNQHQQHQQNQNQNQNQNQNQNQNQNQNQNQNQNQNQNQNQNQNQSQNQHLHQLNQHHPIQHQHHSNNHSNNHSNNHPNQQQNHQQNHQQNQYSQQNYQQQNQGQNNYNNNSFQGNSNNNYNNGYNNNSNNSNNNNNNNNNNNNNNNNNNNNNNNNNNKNSISPTSSPLLFPSPSSAFTSIKSTPPKSISGSSSPFQDQARSPSSSFFHDRDLPFSRGGAQRKPSIGDEFKFHPYSLNNKVTNLIDNCNNSNNNNNNNCTESNDDDSPLNGGLGYSRLSQRRISLPILANRPPSPERSLSPIHERNSLNIINGFNKNNNNNNNNNNNNNNSNNNNNNNGNNNPLPHINFENRRPSREEPIVIINNNNDNNYNKIPSQHMHDKKSSPTPRSILKQTISKYHGNECEEEEEYNTNSNYYGDNDNRNISNQNLVASNASQSSGSKLPSIQSLLNDVSISDNKSKSNSNSPTIIGMNNNFVGGANENISKLSSITMNHHSNFNNLVDDNSHISNNNYNNHHNNNNNNNNNTNNNNHNNNINNNNNNNNNSNNNSNNNNNNSNNNNNNNNNSSNNNNNNNNNNNNNSNNNNNNNNDNNNRSPRNMLFYLNK</sequence>
<name>Y5961_DICDI</name>